<keyword id="KW-0963">Cytoplasm</keyword>
<keyword id="KW-0441">Lipid A biosynthesis</keyword>
<keyword id="KW-0444">Lipid biosynthesis</keyword>
<keyword id="KW-0443">Lipid metabolism</keyword>
<keyword id="KW-0456">Lyase</keyword>
<organism>
    <name type="scientific">Streptococcus pyogenes serotype M4 (strain MGAS10750)</name>
    <dbReference type="NCBI Taxonomy" id="370554"/>
    <lineage>
        <taxon>Bacteria</taxon>
        <taxon>Bacillati</taxon>
        <taxon>Bacillota</taxon>
        <taxon>Bacilli</taxon>
        <taxon>Lactobacillales</taxon>
        <taxon>Streptococcaceae</taxon>
        <taxon>Streptococcus</taxon>
    </lineage>
</organism>
<reference key="1">
    <citation type="journal article" date="2006" name="Proc. Natl. Acad. Sci. U.S.A.">
        <title>Molecular genetic anatomy of inter- and intraserotype variation in the human bacterial pathogen group A Streptococcus.</title>
        <authorList>
            <person name="Beres S.B."/>
            <person name="Richter E.W."/>
            <person name="Nagiec M.J."/>
            <person name="Sumby P."/>
            <person name="Porcella S.F."/>
            <person name="DeLeo F.R."/>
            <person name="Musser J.M."/>
        </authorList>
    </citation>
    <scope>NUCLEOTIDE SEQUENCE [LARGE SCALE GENOMIC DNA]</scope>
    <source>
        <strain>MGAS10750</strain>
    </source>
</reference>
<accession>Q1J590</accession>
<gene>
    <name evidence="1" type="primary">fabZ</name>
    <name type="ordered locus">MGAS10750_Spy1546</name>
</gene>
<name>FABZ_STRPF</name>
<feature type="chain" id="PRO_0000340807" description="3-hydroxyacyl-[acyl-carrier-protein] dehydratase FabZ">
    <location>
        <begin position="1"/>
        <end position="139"/>
    </location>
</feature>
<feature type="active site" evidence="1">
    <location>
        <position position="46"/>
    </location>
</feature>
<protein>
    <recommendedName>
        <fullName evidence="1">3-hydroxyacyl-[acyl-carrier-protein] dehydratase FabZ</fullName>
        <ecNumber evidence="1">4.2.1.59</ecNumber>
    </recommendedName>
    <alternativeName>
        <fullName evidence="1">(3R)-hydroxymyristoyl-[acyl-carrier-protein] dehydratase</fullName>
        <shortName evidence="1">(3R)-hydroxymyristoyl-ACP dehydrase</shortName>
    </alternativeName>
    <alternativeName>
        <fullName evidence="1">Beta-hydroxyacyl-ACP dehydratase</fullName>
    </alternativeName>
</protein>
<sequence>MDIREIQAALPHRYPMLLVDRVLEVSDDHIVAIKNVTINEPFFNGHFPHYPVMPGVLIMEALAQTAGVLELSKEENKGKLVFYAGMDKVKFKKQVVPGDQLVMTATFIKRRGTIAVVEARAEVDGKLAASGTLTFACGQ</sequence>
<proteinExistence type="inferred from homology"/>
<evidence type="ECO:0000255" key="1">
    <source>
        <dbReference type="HAMAP-Rule" id="MF_00406"/>
    </source>
</evidence>
<evidence type="ECO:0000305" key="2"/>
<dbReference type="EC" id="4.2.1.59" evidence="1"/>
<dbReference type="EMBL" id="CP000262">
    <property type="protein sequence ID" value="ABF38496.1"/>
    <property type="status" value="ALT_INIT"/>
    <property type="molecule type" value="Genomic_DNA"/>
</dbReference>
<dbReference type="SMR" id="Q1J590"/>
<dbReference type="KEGG" id="spi:MGAS10750_Spy1546"/>
<dbReference type="HOGENOM" id="CLU_078912_1_2_9"/>
<dbReference type="Proteomes" id="UP000002434">
    <property type="component" value="Chromosome"/>
</dbReference>
<dbReference type="GO" id="GO:0005737">
    <property type="term" value="C:cytoplasm"/>
    <property type="evidence" value="ECO:0007669"/>
    <property type="project" value="UniProtKB-SubCell"/>
</dbReference>
<dbReference type="GO" id="GO:0016020">
    <property type="term" value="C:membrane"/>
    <property type="evidence" value="ECO:0007669"/>
    <property type="project" value="GOC"/>
</dbReference>
<dbReference type="GO" id="GO:0019171">
    <property type="term" value="F:(3R)-hydroxyacyl-[acyl-carrier-protein] dehydratase activity"/>
    <property type="evidence" value="ECO:0007669"/>
    <property type="project" value="UniProtKB-EC"/>
</dbReference>
<dbReference type="GO" id="GO:0006633">
    <property type="term" value="P:fatty acid biosynthetic process"/>
    <property type="evidence" value="ECO:0007669"/>
    <property type="project" value="UniProtKB-UniRule"/>
</dbReference>
<dbReference type="GO" id="GO:0009245">
    <property type="term" value="P:lipid A biosynthetic process"/>
    <property type="evidence" value="ECO:0007669"/>
    <property type="project" value="UniProtKB-UniRule"/>
</dbReference>
<dbReference type="CDD" id="cd01288">
    <property type="entry name" value="FabZ"/>
    <property type="match status" value="1"/>
</dbReference>
<dbReference type="FunFam" id="3.10.129.10:FF:000001">
    <property type="entry name" value="3-hydroxyacyl-[acyl-carrier-protein] dehydratase FabZ"/>
    <property type="match status" value="1"/>
</dbReference>
<dbReference type="Gene3D" id="3.10.129.10">
    <property type="entry name" value="Hotdog Thioesterase"/>
    <property type="match status" value="1"/>
</dbReference>
<dbReference type="HAMAP" id="MF_00406">
    <property type="entry name" value="FabZ"/>
    <property type="match status" value="1"/>
</dbReference>
<dbReference type="InterPro" id="IPR013114">
    <property type="entry name" value="FabA_FabZ"/>
</dbReference>
<dbReference type="InterPro" id="IPR010084">
    <property type="entry name" value="FabZ"/>
</dbReference>
<dbReference type="InterPro" id="IPR029069">
    <property type="entry name" value="HotDog_dom_sf"/>
</dbReference>
<dbReference type="NCBIfam" id="TIGR01750">
    <property type="entry name" value="fabZ"/>
    <property type="match status" value="1"/>
</dbReference>
<dbReference type="NCBIfam" id="NF000582">
    <property type="entry name" value="PRK00006.1"/>
    <property type="match status" value="1"/>
</dbReference>
<dbReference type="PANTHER" id="PTHR30272">
    <property type="entry name" value="3-HYDROXYACYL-[ACYL-CARRIER-PROTEIN] DEHYDRATASE"/>
    <property type="match status" value="1"/>
</dbReference>
<dbReference type="PANTHER" id="PTHR30272:SF1">
    <property type="entry name" value="3-HYDROXYACYL-[ACYL-CARRIER-PROTEIN] DEHYDRATASE"/>
    <property type="match status" value="1"/>
</dbReference>
<dbReference type="Pfam" id="PF07977">
    <property type="entry name" value="FabA"/>
    <property type="match status" value="1"/>
</dbReference>
<dbReference type="SUPFAM" id="SSF54637">
    <property type="entry name" value="Thioesterase/thiol ester dehydrase-isomerase"/>
    <property type="match status" value="1"/>
</dbReference>
<comment type="function">
    <text evidence="1">Involved in unsaturated fatty acids biosynthesis. Catalyzes the dehydration of short chain beta-hydroxyacyl-ACPs and long chain saturated and unsaturated beta-hydroxyacyl-ACPs.</text>
</comment>
<comment type="catalytic activity">
    <reaction evidence="1">
        <text>a (3R)-hydroxyacyl-[ACP] = a (2E)-enoyl-[ACP] + H2O</text>
        <dbReference type="Rhea" id="RHEA:13097"/>
        <dbReference type="Rhea" id="RHEA-COMP:9925"/>
        <dbReference type="Rhea" id="RHEA-COMP:9945"/>
        <dbReference type="ChEBI" id="CHEBI:15377"/>
        <dbReference type="ChEBI" id="CHEBI:78784"/>
        <dbReference type="ChEBI" id="CHEBI:78827"/>
        <dbReference type="EC" id="4.2.1.59"/>
    </reaction>
</comment>
<comment type="subcellular location">
    <subcellularLocation>
        <location evidence="1">Cytoplasm</location>
    </subcellularLocation>
</comment>
<comment type="similarity">
    <text evidence="1">Belongs to the thioester dehydratase family. FabZ subfamily.</text>
</comment>
<comment type="sequence caution" evidence="2">
    <conflict type="erroneous initiation">
        <sequence resource="EMBL-CDS" id="ABF38496"/>
    </conflict>
</comment>